<organism>
    <name type="scientific">Rickettsia rickettsii (strain Sheila Smith)</name>
    <dbReference type="NCBI Taxonomy" id="392021"/>
    <lineage>
        <taxon>Bacteria</taxon>
        <taxon>Pseudomonadati</taxon>
        <taxon>Pseudomonadota</taxon>
        <taxon>Alphaproteobacteria</taxon>
        <taxon>Rickettsiales</taxon>
        <taxon>Rickettsiaceae</taxon>
        <taxon>Rickettsieae</taxon>
        <taxon>Rickettsia</taxon>
        <taxon>spotted fever group</taxon>
    </lineage>
</organism>
<proteinExistence type="inferred from homology"/>
<reference key="1">
    <citation type="submission" date="2007-09" db="EMBL/GenBank/DDBJ databases">
        <title>Complete genome sequence of Rickettsia rickettsii.</title>
        <authorList>
            <person name="Madan A."/>
            <person name="Fahey J."/>
            <person name="Helton E."/>
            <person name="Ketteman M."/>
            <person name="Madan A."/>
            <person name="Rodrigues S."/>
            <person name="Sanchez A."/>
            <person name="Dasch G."/>
            <person name="Eremeeva M."/>
        </authorList>
    </citation>
    <scope>NUCLEOTIDE SEQUENCE [LARGE SCALE GENOMIC DNA]</scope>
    <source>
        <strain>Sheila Smith</strain>
    </source>
</reference>
<protein>
    <recommendedName>
        <fullName evidence="1">Chaperonin GroEL</fullName>
        <ecNumber evidence="1">5.6.1.7</ecNumber>
    </recommendedName>
    <alternativeName>
        <fullName evidence="1">60 kDa chaperonin</fullName>
    </alternativeName>
    <alternativeName>
        <fullName evidence="1">Chaperonin-60</fullName>
        <shortName evidence="1">Cpn60</shortName>
    </alternativeName>
</protein>
<feature type="chain" id="PRO_1000025830" description="Chaperonin GroEL">
    <location>
        <begin position="1"/>
        <end position="547"/>
    </location>
</feature>
<feature type="region of interest" description="Disordered" evidence="2">
    <location>
        <begin position="527"/>
        <end position="547"/>
    </location>
</feature>
<feature type="compositionally biased region" description="Gly residues" evidence="2">
    <location>
        <begin position="537"/>
        <end position="547"/>
    </location>
</feature>
<feature type="binding site" evidence="1">
    <location>
        <begin position="30"/>
        <end position="33"/>
    </location>
    <ligand>
        <name>ATP</name>
        <dbReference type="ChEBI" id="CHEBI:30616"/>
    </ligand>
</feature>
<feature type="binding site" evidence="1">
    <location>
        <position position="51"/>
    </location>
    <ligand>
        <name>ATP</name>
        <dbReference type="ChEBI" id="CHEBI:30616"/>
    </ligand>
</feature>
<feature type="binding site" evidence="1">
    <location>
        <begin position="87"/>
        <end position="91"/>
    </location>
    <ligand>
        <name>ATP</name>
        <dbReference type="ChEBI" id="CHEBI:30616"/>
    </ligand>
</feature>
<feature type="binding site" evidence="1">
    <location>
        <position position="415"/>
    </location>
    <ligand>
        <name>ATP</name>
        <dbReference type="ChEBI" id="CHEBI:30616"/>
    </ligand>
</feature>
<feature type="binding site" evidence="1">
    <location>
        <position position="496"/>
    </location>
    <ligand>
        <name>ATP</name>
        <dbReference type="ChEBI" id="CHEBI:30616"/>
    </ligand>
</feature>
<comment type="function">
    <text evidence="1">Together with its co-chaperonin GroES, plays an essential role in assisting protein folding. The GroEL-GroES system forms a nano-cage that allows encapsulation of the non-native substrate proteins and provides a physical environment optimized to promote and accelerate protein folding.</text>
</comment>
<comment type="catalytic activity">
    <reaction evidence="1">
        <text>ATP + H2O + a folded polypeptide = ADP + phosphate + an unfolded polypeptide.</text>
        <dbReference type="EC" id="5.6.1.7"/>
    </reaction>
</comment>
<comment type="subunit">
    <text evidence="1">Forms a cylinder of 14 subunits composed of two heptameric rings stacked back-to-back. Interacts with the co-chaperonin GroES.</text>
</comment>
<comment type="subcellular location">
    <subcellularLocation>
        <location evidence="1">Cytoplasm</location>
    </subcellularLocation>
</comment>
<comment type="similarity">
    <text evidence="1">Belongs to the chaperonin (HSP60) family.</text>
</comment>
<keyword id="KW-0067">ATP-binding</keyword>
<keyword id="KW-0143">Chaperone</keyword>
<keyword id="KW-0963">Cytoplasm</keyword>
<keyword id="KW-0413">Isomerase</keyword>
<keyword id="KW-0547">Nucleotide-binding</keyword>
<accession>A8GT30</accession>
<name>CH60_RICRS</name>
<dbReference type="EC" id="5.6.1.7" evidence="1"/>
<dbReference type="EMBL" id="CP000848">
    <property type="protein sequence ID" value="ABV76555.1"/>
    <property type="molecule type" value="Genomic_DNA"/>
</dbReference>
<dbReference type="RefSeq" id="WP_012151120.1">
    <property type="nucleotide sequence ID" value="NC_009882.1"/>
</dbReference>
<dbReference type="SMR" id="A8GT30"/>
<dbReference type="GeneID" id="34514693"/>
<dbReference type="GeneID" id="79937632"/>
<dbReference type="KEGG" id="rri:A1G_05320"/>
<dbReference type="HOGENOM" id="CLU_016503_3_0_5"/>
<dbReference type="Proteomes" id="UP000006832">
    <property type="component" value="Chromosome"/>
</dbReference>
<dbReference type="GO" id="GO:0005737">
    <property type="term" value="C:cytoplasm"/>
    <property type="evidence" value="ECO:0007669"/>
    <property type="project" value="UniProtKB-SubCell"/>
</dbReference>
<dbReference type="GO" id="GO:0005524">
    <property type="term" value="F:ATP binding"/>
    <property type="evidence" value="ECO:0007669"/>
    <property type="project" value="UniProtKB-UniRule"/>
</dbReference>
<dbReference type="GO" id="GO:0140662">
    <property type="term" value="F:ATP-dependent protein folding chaperone"/>
    <property type="evidence" value="ECO:0007669"/>
    <property type="project" value="InterPro"/>
</dbReference>
<dbReference type="GO" id="GO:0016853">
    <property type="term" value="F:isomerase activity"/>
    <property type="evidence" value="ECO:0007669"/>
    <property type="project" value="UniProtKB-KW"/>
</dbReference>
<dbReference type="GO" id="GO:0051082">
    <property type="term" value="F:unfolded protein binding"/>
    <property type="evidence" value="ECO:0007669"/>
    <property type="project" value="UniProtKB-UniRule"/>
</dbReference>
<dbReference type="GO" id="GO:0042026">
    <property type="term" value="P:protein refolding"/>
    <property type="evidence" value="ECO:0007669"/>
    <property type="project" value="UniProtKB-UniRule"/>
</dbReference>
<dbReference type="CDD" id="cd03344">
    <property type="entry name" value="GroEL"/>
    <property type="match status" value="1"/>
</dbReference>
<dbReference type="FunFam" id="3.50.7.10:FF:000001">
    <property type="entry name" value="60 kDa chaperonin"/>
    <property type="match status" value="1"/>
</dbReference>
<dbReference type="Gene3D" id="3.50.7.10">
    <property type="entry name" value="GroEL"/>
    <property type="match status" value="1"/>
</dbReference>
<dbReference type="Gene3D" id="1.10.560.10">
    <property type="entry name" value="GroEL-like equatorial domain"/>
    <property type="match status" value="1"/>
</dbReference>
<dbReference type="Gene3D" id="3.30.260.10">
    <property type="entry name" value="TCP-1-like chaperonin intermediate domain"/>
    <property type="match status" value="1"/>
</dbReference>
<dbReference type="HAMAP" id="MF_00600">
    <property type="entry name" value="CH60"/>
    <property type="match status" value="1"/>
</dbReference>
<dbReference type="InterPro" id="IPR018370">
    <property type="entry name" value="Chaperonin_Cpn60_CS"/>
</dbReference>
<dbReference type="InterPro" id="IPR001844">
    <property type="entry name" value="Cpn60/GroEL"/>
</dbReference>
<dbReference type="InterPro" id="IPR002423">
    <property type="entry name" value="Cpn60/GroEL/TCP-1"/>
</dbReference>
<dbReference type="InterPro" id="IPR027409">
    <property type="entry name" value="GroEL-like_apical_dom_sf"/>
</dbReference>
<dbReference type="InterPro" id="IPR027413">
    <property type="entry name" value="GROEL-like_equatorial_sf"/>
</dbReference>
<dbReference type="InterPro" id="IPR027410">
    <property type="entry name" value="TCP-1-like_intermed_sf"/>
</dbReference>
<dbReference type="NCBIfam" id="TIGR02348">
    <property type="entry name" value="GroEL"/>
    <property type="match status" value="1"/>
</dbReference>
<dbReference type="NCBIfam" id="NF000592">
    <property type="entry name" value="PRK00013.1"/>
    <property type="match status" value="1"/>
</dbReference>
<dbReference type="NCBIfam" id="NF009487">
    <property type="entry name" value="PRK12849.1"/>
    <property type="match status" value="1"/>
</dbReference>
<dbReference type="NCBIfam" id="NF009488">
    <property type="entry name" value="PRK12850.1"/>
    <property type="match status" value="1"/>
</dbReference>
<dbReference type="NCBIfam" id="NF009489">
    <property type="entry name" value="PRK12851.1"/>
    <property type="match status" value="1"/>
</dbReference>
<dbReference type="PANTHER" id="PTHR45633">
    <property type="entry name" value="60 KDA HEAT SHOCK PROTEIN, MITOCHONDRIAL"/>
    <property type="match status" value="1"/>
</dbReference>
<dbReference type="Pfam" id="PF00118">
    <property type="entry name" value="Cpn60_TCP1"/>
    <property type="match status" value="1"/>
</dbReference>
<dbReference type="PRINTS" id="PR00298">
    <property type="entry name" value="CHAPERONIN60"/>
</dbReference>
<dbReference type="SUPFAM" id="SSF52029">
    <property type="entry name" value="GroEL apical domain-like"/>
    <property type="match status" value="1"/>
</dbReference>
<dbReference type="SUPFAM" id="SSF48592">
    <property type="entry name" value="GroEL equatorial domain-like"/>
    <property type="match status" value="1"/>
</dbReference>
<dbReference type="SUPFAM" id="SSF54849">
    <property type="entry name" value="GroEL-intermediate domain like"/>
    <property type="match status" value="1"/>
</dbReference>
<dbReference type="PROSITE" id="PS00296">
    <property type="entry name" value="CHAPERONINS_CPN60"/>
    <property type="match status" value="1"/>
</dbReference>
<gene>
    <name evidence="1" type="primary">groEL</name>
    <name evidence="1" type="synonym">groL</name>
    <name type="ordered locus">A1G_05320</name>
</gene>
<evidence type="ECO:0000255" key="1">
    <source>
        <dbReference type="HAMAP-Rule" id="MF_00600"/>
    </source>
</evidence>
<evidence type="ECO:0000256" key="2">
    <source>
        <dbReference type="SAM" id="MobiDB-lite"/>
    </source>
</evidence>
<sequence>MATKLIKHGSKAREQMLEGIDILADAVKVTLGPKGRNVLIEQSFGSPKITKDGVTVAKSIELKDKIRNAGAQLLKSAATKAAEVAGDGTTTATVLARALAREGNKLVAAGYNPMDLKRGMDLAVNAVVEEIKKSSKKINSQEEIAQVGTISSNGDKEIGEKIAKAMEEVGKEGVITVEEAKNFSFDVEVVKGMMFDRGYLSPYFVTNSEKMVAELENPFILLFEKKLSNLQPMLPILEAVVQSQRPLLIIAEDVEGEALATLVVNRLRGGLKVAAVKAPGFGDRRKAMMEDIAILTKGELITEDLGMKLENVSIKSLGTAKRVTISKENTVIVDGNGDKKNIEDRVLQIKSQIAETTSDYDKEKLQERLAKLSGGVAVLKVGGATEVEVKERKDRVEDALAATRAAVEEGVVAGGGVTLLHASQPLTKLKVENKDQQAGIEIVIEALKDPLKQIVENAGENGGVVVGKLLEHKDKNYGFNAQDMQYVDMIKAGIIDPAKVVRTALQDAASVASLIITTETLIVDEPSDKAEPMPMRGGMGGMGGMDF</sequence>